<name>PMPG_CHLTR</name>
<organism>
    <name type="scientific">Chlamydia trachomatis serovar D (strain ATCC VR-885 / DSM 19411 / UW-3/Cx)</name>
    <dbReference type="NCBI Taxonomy" id="272561"/>
    <lineage>
        <taxon>Bacteria</taxon>
        <taxon>Pseudomonadati</taxon>
        <taxon>Chlamydiota</taxon>
        <taxon>Chlamydiia</taxon>
        <taxon>Chlamydiales</taxon>
        <taxon>Chlamydiaceae</taxon>
        <taxon>Chlamydia/Chlamydophila group</taxon>
        <taxon>Chlamydia</taxon>
    </lineage>
</organism>
<comment type="subcellular location">
    <subcellularLocation>
        <location>Secreted</location>
        <location>Cell wall</location>
    </subcellularLocation>
    <subcellularLocation>
        <location evidence="3">Cell outer membrane</location>
        <topology evidence="3">Peripheral membrane protein</topology>
        <orientation evidence="3">Extracellular side</orientation>
    </subcellularLocation>
</comment>
<comment type="developmental stage">
    <text>Elementary body.</text>
</comment>
<comment type="similarity">
    <text evidence="3">Belongs to the PMP outer membrane protein family.</text>
</comment>
<evidence type="ECO:0000255" key="1"/>
<evidence type="ECO:0000255" key="2">
    <source>
        <dbReference type="PROSITE-ProRule" id="PRU00556"/>
    </source>
</evidence>
<evidence type="ECO:0000305" key="3"/>
<gene>
    <name type="primary">pmpG</name>
    <name type="ordered locus">CT_871</name>
</gene>
<protein>
    <recommendedName>
        <fullName>Probable outer membrane protein PmpG</fullName>
    </recommendedName>
    <alternativeName>
        <fullName>Polymorphic membrane protein G</fullName>
    </alternativeName>
</protein>
<accession>O84879</accession>
<dbReference type="EMBL" id="AE001273">
    <property type="protein sequence ID" value="AAC68469.1"/>
    <property type="molecule type" value="Genomic_DNA"/>
</dbReference>
<dbReference type="PIR" id="G71460">
    <property type="entry name" value="G71460"/>
</dbReference>
<dbReference type="RefSeq" id="NP_220393.1">
    <property type="nucleotide sequence ID" value="NC_000117.1"/>
</dbReference>
<dbReference type="RefSeq" id="WP_010725377.1">
    <property type="nucleotide sequence ID" value="NC_000117.1"/>
</dbReference>
<dbReference type="STRING" id="272561.CT_871"/>
<dbReference type="EnsemblBacteria" id="AAC68469">
    <property type="protein sequence ID" value="AAC68469"/>
    <property type="gene ID" value="CT_871"/>
</dbReference>
<dbReference type="GeneID" id="884677"/>
<dbReference type="KEGG" id="ctr:CT_871"/>
<dbReference type="PATRIC" id="fig|272561.5.peg.962"/>
<dbReference type="HOGENOM" id="CLU_004549_1_1_0"/>
<dbReference type="InParanoid" id="O84879"/>
<dbReference type="OrthoDB" id="16642at2"/>
<dbReference type="Proteomes" id="UP000000431">
    <property type="component" value="Chromosome"/>
</dbReference>
<dbReference type="GO" id="GO:0009279">
    <property type="term" value="C:cell outer membrane"/>
    <property type="evidence" value="ECO:0007669"/>
    <property type="project" value="UniProtKB-SubCell"/>
</dbReference>
<dbReference type="GO" id="GO:0005576">
    <property type="term" value="C:extracellular region"/>
    <property type="evidence" value="ECO:0007669"/>
    <property type="project" value="UniProtKB-KW"/>
</dbReference>
<dbReference type="Gene3D" id="2.40.128.130">
    <property type="entry name" value="Autotransporter beta-domain"/>
    <property type="match status" value="1"/>
</dbReference>
<dbReference type="InterPro" id="IPR005546">
    <property type="entry name" value="Autotransporte_beta"/>
</dbReference>
<dbReference type="InterPro" id="IPR036709">
    <property type="entry name" value="Autotransporte_beta_dom_sf"/>
</dbReference>
<dbReference type="InterPro" id="IPR011427">
    <property type="entry name" value="Polymorphic_membr_middle"/>
</dbReference>
<dbReference type="InterPro" id="IPR003368">
    <property type="entry name" value="POMP_repeat"/>
</dbReference>
<dbReference type="NCBIfam" id="TIGR01376">
    <property type="entry name" value="POMP_repeat"/>
    <property type="match status" value="2"/>
</dbReference>
<dbReference type="Pfam" id="PF03797">
    <property type="entry name" value="Autotransporter"/>
    <property type="match status" value="1"/>
</dbReference>
<dbReference type="Pfam" id="PF02415">
    <property type="entry name" value="Chlam_PMP"/>
    <property type="match status" value="2"/>
</dbReference>
<dbReference type="Pfam" id="PF07548">
    <property type="entry name" value="ChlamPMP_M"/>
    <property type="match status" value="1"/>
</dbReference>
<dbReference type="SMART" id="SM00869">
    <property type="entry name" value="Autotransporter"/>
    <property type="match status" value="1"/>
</dbReference>
<dbReference type="SUPFAM" id="SSF103515">
    <property type="entry name" value="Autotransporter"/>
    <property type="match status" value="1"/>
</dbReference>
<dbReference type="PROSITE" id="PS51208">
    <property type="entry name" value="AUTOTRANSPORTER"/>
    <property type="match status" value="1"/>
</dbReference>
<sequence length="1013" mass="107367">MQTSFHKFFLSMILAYSCCSLSGGGYAAEIMIPQGIYDGETLTVSFPYTVIGDPSGTTVFSAGELTLKNLDNSIAALPLSCFGNLLGSFTVLGRGHSLTFENIRTSTNGAALSDSANSGLFTIEGFKELSFSNCNSLLAVLPAATTNNGSQTPTTTSTPSNGTIYSKTDLLLLNNEKFSFYSNLVSGDGGAIDAKSLTVQGISKLCVFQENTAQADGGACQVVTSFSAMANEAPIAFIANVAGVRGGGIAAVQDGQQGVSSSTSTEDPVVSFSRNTAVEFDGNVARVGGGIYSYGNVAFLNNGKTLFLNNVASPVYIAAEQPTNGQASNTSDNYGDGGAIFCKNGAQAAGSNNSGSVSFDGEGVVFFSSNVAAGKGGAIYAKKLSVANCGPVQFLGNIANDGGAIYLGESGELSLSADYGDIIFDGNLKRTAKENAADVNGVTVSSQAISMGSGGKITTLRAKAGHQILFNDPIEMANGNNQPAQSSEPLKINDGEGYTGDIVFANGNSTLYQNVTIEQGRIVLREKAKLSVNSLSQTGGSLYMEAGSTLDFVTPQPPQQPPAANQLITLSNLHLSLSSLLANNAVTNPPTNPPAQDSHPAIIGSTTAGSVTISGPIFFEDLDDTAYDRYDWLGSNQKIDVLKLQLGTQPSANAPSDLTLGNEMPKYGYQGSWKLAWDPNTANNGPYTLKATWTKTGYNPGPERVASLVPNSLWGSILDIRSAHSAIQASVDGRSYCRGLWVSGVSNFFYHDRDALGQGYRYISGGYSLGANSYFGSSMFGLAFTEVFGRSKDYVVCRSNHHACIGSVYLSTKQALCGSYLFGDAFIRASYGFGNQHMKTSYTFAEESDVRWDNNCLVGEIGVGLPIVITPSKLYLNELRPFVQAEFSYADHESFTEEGDQARAFRSGHLMNLSVPVGVKFDRCSSTHPNKYSFMGAYICDAYRTISGTQTTLLSHQETWTTDAFHLARHGVIVRGSMYASLTSNIEVYGHGRYEYRDTSRGYGLSAGSKVRF</sequence>
<keyword id="KW-0998">Cell outer membrane</keyword>
<keyword id="KW-0134">Cell wall</keyword>
<keyword id="KW-0472">Membrane</keyword>
<keyword id="KW-1185">Reference proteome</keyword>
<keyword id="KW-0964">Secreted</keyword>
<keyword id="KW-0732">Signal</keyword>
<keyword id="KW-0812">Transmembrane</keyword>
<keyword id="KW-1134">Transmembrane beta strand</keyword>
<proteinExistence type="evidence at transcript level"/>
<reference key="1">
    <citation type="journal article" date="1998" name="Science">
        <title>Genome sequence of an obligate intracellular pathogen of humans: Chlamydia trachomatis.</title>
        <authorList>
            <person name="Stephens R.S."/>
            <person name="Kalman S."/>
            <person name="Lammel C.J."/>
            <person name="Fan J."/>
            <person name="Marathe R."/>
            <person name="Aravind L."/>
            <person name="Mitchell W.P."/>
            <person name="Olinger L."/>
            <person name="Tatusov R.L."/>
            <person name="Zhao Q."/>
            <person name="Koonin E.V."/>
            <person name="Davis R.W."/>
        </authorList>
    </citation>
    <scope>NUCLEOTIDE SEQUENCE [LARGE SCALE GENOMIC DNA]</scope>
    <source>
        <strain>ATCC VR-885 / DSM 19411 / UW-3/Cx</strain>
    </source>
</reference>
<feature type="signal peptide" evidence="1">
    <location>
        <begin position="1"/>
        <end position="27"/>
    </location>
</feature>
<feature type="chain" id="PRO_0000024729" description="Probable outer membrane protein PmpG">
    <location>
        <begin position="28"/>
        <end position="1013"/>
    </location>
</feature>
<feature type="domain" description="Autotransporter" evidence="2">
    <location>
        <begin position="733"/>
        <end position="1013"/>
    </location>
</feature>